<keyword id="KW-0143">Chaperone</keyword>
<keyword id="KW-1015">Disulfide bond</keyword>
<keyword id="KW-0472">Membrane</keyword>
<keyword id="KW-0479">Metal-binding</keyword>
<keyword id="KW-0496">Mitochondrion</keyword>
<keyword id="KW-0999">Mitochondrion inner membrane</keyword>
<keyword id="KW-0653">Protein transport</keyword>
<keyword id="KW-1185">Reference proteome</keyword>
<keyword id="KW-0811">Translocation</keyword>
<keyword id="KW-0813">Transport</keyword>
<keyword id="KW-0862">Zinc</keyword>
<protein>
    <recommendedName>
        <fullName>Mitochondrial import inner membrane translocase subunit Tim13</fullName>
    </recommendedName>
</protein>
<dbReference type="EMBL" id="BC076351">
    <property type="protein sequence ID" value="AAH76351.1"/>
    <property type="molecule type" value="mRNA"/>
</dbReference>
<dbReference type="RefSeq" id="NP_001002465.1">
    <property type="nucleotide sequence ID" value="NM_001002465.2"/>
</dbReference>
<dbReference type="SMR" id="Q6DGJ3"/>
<dbReference type="FunCoup" id="Q6DGJ3">
    <property type="interactions" value="2649"/>
</dbReference>
<dbReference type="STRING" id="7955.ENSDARP00000075599"/>
<dbReference type="PaxDb" id="7955-ENSDARP00000075599"/>
<dbReference type="Ensembl" id="ENSDART00000081156">
    <property type="protein sequence ID" value="ENSDARP00000075599"/>
    <property type="gene ID" value="ENSDARG00000058297"/>
</dbReference>
<dbReference type="GeneID" id="436738"/>
<dbReference type="KEGG" id="dre:436738"/>
<dbReference type="AGR" id="ZFIN:ZDB-GENE-040718-167"/>
<dbReference type="CTD" id="26517"/>
<dbReference type="ZFIN" id="ZDB-GENE-040718-167">
    <property type="gene designation" value="timm13"/>
</dbReference>
<dbReference type="eggNOG" id="KOG1733">
    <property type="taxonomic scope" value="Eukaryota"/>
</dbReference>
<dbReference type="HOGENOM" id="CLU_141397_0_2_1"/>
<dbReference type="InParanoid" id="Q6DGJ3"/>
<dbReference type="OMA" id="MAAWNQV"/>
<dbReference type="OrthoDB" id="7813104at2759"/>
<dbReference type="PhylomeDB" id="Q6DGJ3"/>
<dbReference type="TreeFam" id="TF106194"/>
<dbReference type="PRO" id="PR:Q6DGJ3"/>
<dbReference type="Proteomes" id="UP000000437">
    <property type="component" value="Chromosome 22"/>
</dbReference>
<dbReference type="Bgee" id="ENSDARG00000058297">
    <property type="expression patterns" value="Expressed in somite and 35 other cell types or tissues"/>
</dbReference>
<dbReference type="ExpressionAtlas" id="Q6DGJ3">
    <property type="expression patterns" value="baseline and differential"/>
</dbReference>
<dbReference type="GO" id="GO:0005743">
    <property type="term" value="C:mitochondrial inner membrane"/>
    <property type="evidence" value="ECO:0007669"/>
    <property type="project" value="UniProtKB-SubCell"/>
</dbReference>
<dbReference type="GO" id="GO:0042719">
    <property type="term" value="C:mitochondrial intermembrane space protein transporter complex"/>
    <property type="evidence" value="ECO:0000318"/>
    <property type="project" value="GO_Central"/>
</dbReference>
<dbReference type="GO" id="GO:0046872">
    <property type="term" value="F:metal ion binding"/>
    <property type="evidence" value="ECO:0007669"/>
    <property type="project" value="UniProtKB-KW"/>
</dbReference>
<dbReference type="GO" id="GO:0045039">
    <property type="term" value="P:protein insertion into mitochondrial inner membrane"/>
    <property type="evidence" value="ECO:0000318"/>
    <property type="project" value="GO_Central"/>
</dbReference>
<dbReference type="FunFam" id="1.10.287.810:FF:000001">
    <property type="entry name" value="mitochondrial import inner membrane translocase subunit TIM13"/>
    <property type="match status" value="1"/>
</dbReference>
<dbReference type="Gene3D" id="1.10.287.810">
    <property type="entry name" value="Mitochondrial import inner membrane translocase subunit tim13 like domains"/>
    <property type="match status" value="1"/>
</dbReference>
<dbReference type="InterPro" id="IPR004217">
    <property type="entry name" value="Tim10-like"/>
</dbReference>
<dbReference type="InterPro" id="IPR035427">
    <property type="entry name" value="Tim10-like_dom_sf"/>
</dbReference>
<dbReference type="Pfam" id="PF02953">
    <property type="entry name" value="zf-Tim10_DDP"/>
    <property type="match status" value="1"/>
</dbReference>
<dbReference type="SUPFAM" id="SSF144122">
    <property type="entry name" value="Tim10-like"/>
    <property type="match status" value="1"/>
</dbReference>
<comment type="function">
    <text evidence="1">Mitochondrial intermembrane chaperone that participates in the import and insertion of some multi-pass transmembrane proteins into the mitochondrial inner membrane. Also required for the transfer of beta-barrel precursors from the TOM complex to the sorting and assembly machinery (SAM complex) of the outer membrane. Acts as a chaperone-like protein that protects the hydrophobic precursors from aggregation and guide them through the mitochondrial intermembrane space. The TIMM8-TIMM13 complex mediates the import of some proteins while the predominant TIMM9-TIMM10 70 kDa complex mediates the import of much more proteins (By similarity).</text>
</comment>
<comment type="subunit">
    <text evidence="1">Heterohexamer; composed of 3 copies of TIMM8 (TIMM8A or TIMM8B) and 3 copies of TIMM13, named soluble 70 kDa complex. Associates with the TIM22 complex, whose core is composed of TIMM22 (By similarity).</text>
</comment>
<comment type="subcellular location">
    <subcellularLocation>
        <location evidence="1">Mitochondrion inner membrane</location>
        <topology evidence="1">Peripheral membrane protein</topology>
        <orientation evidence="1">Intermembrane side</orientation>
    </subcellularLocation>
</comment>
<comment type="domain">
    <text evidence="1">The twin CX3C motif contains 4 conserved Cys residues that form 2 disulfide bonds in the mitochondrial intermembrane space. However, during the transit of TIMM13 from cytoplasm into mitochondrion, the Cys residues probably coordinate zinc, thereby preventing folding and allowing its transfer across mitochondrial outer membrane (By similarity).</text>
</comment>
<comment type="similarity">
    <text evidence="2">Belongs to the small Tim family.</text>
</comment>
<gene>
    <name type="primary">timm13</name>
    <name type="synonym">tim13a</name>
    <name type="synonym">timm13a</name>
    <name type="ORF">zgc:92895</name>
</gene>
<name>TIM13_DANRE</name>
<organism>
    <name type="scientific">Danio rerio</name>
    <name type="common">Zebrafish</name>
    <name type="synonym">Brachydanio rerio</name>
    <dbReference type="NCBI Taxonomy" id="7955"/>
    <lineage>
        <taxon>Eukaryota</taxon>
        <taxon>Metazoa</taxon>
        <taxon>Chordata</taxon>
        <taxon>Craniata</taxon>
        <taxon>Vertebrata</taxon>
        <taxon>Euteleostomi</taxon>
        <taxon>Actinopterygii</taxon>
        <taxon>Neopterygii</taxon>
        <taxon>Teleostei</taxon>
        <taxon>Ostariophysi</taxon>
        <taxon>Cypriniformes</taxon>
        <taxon>Danionidae</taxon>
        <taxon>Danioninae</taxon>
        <taxon>Danio</taxon>
    </lineage>
</organism>
<accession>Q6DGJ3</accession>
<feature type="chain" id="PRO_0000228066" description="Mitochondrial import inner membrane translocase subunit Tim13">
    <location>
        <begin position="1"/>
        <end position="95"/>
    </location>
</feature>
<feature type="short sequence motif" description="Twin CX3C motif">
    <location>
        <begin position="46"/>
        <end position="69"/>
    </location>
</feature>
<feature type="disulfide bond" evidence="1">
    <location>
        <begin position="46"/>
        <end position="69"/>
    </location>
</feature>
<feature type="disulfide bond" evidence="1">
    <location>
        <begin position="50"/>
        <end position="65"/>
    </location>
</feature>
<proteinExistence type="inferred from homology"/>
<sequence length="95" mass="10621">MEGFGSDFSSGSSSGKMDTGTIMEQVKVQIAVANAQELLQRMTDKCFKKCIGKPGSTLDNSEQKCIAMCMDRYMDAWNTVSRAYNSRLQRERAHI</sequence>
<reference key="1">
    <citation type="submission" date="2004-07" db="EMBL/GenBank/DDBJ databases">
        <authorList>
            <consortium name="NIH - Zebrafish Gene Collection (ZGC) project"/>
        </authorList>
    </citation>
    <scope>NUCLEOTIDE SEQUENCE [LARGE SCALE MRNA]</scope>
    <source>
        <tissue>Brain</tissue>
    </source>
</reference>
<evidence type="ECO:0000250" key="1"/>
<evidence type="ECO:0000305" key="2"/>